<protein>
    <recommendedName>
        <fullName evidence="1">Large ribosomal subunit protein eL22</fullName>
    </recommendedName>
    <alternativeName>
        <fullName>60S ribosomal protein L22</fullName>
    </alternativeName>
</protein>
<keyword id="KW-0002">3D-structure</keyword>
<keyword id="KW-0025">Alternative splicing</keyword>
<keyword id="KW-0903">Direct protein sequencing</keyword>
<keyword id="KW-1185">Reference proteome</keyword>
<keyword id="KW-0687">Ribonucleoprotein</keyword>
<keyword id="KW-0689">Ribosomal protein</keyword>
<comment type="alternative products">
    <event type="alternative splicing"/>
    <isoform>
        <id>P52819-1</id>
        <name>a</name>
        <sequence type="displayed"/>
    </isoform>
    <isoform>
        <id>P52819-2</id>
        <name>b</name>
        <sequence type="described" ref="VSP_021365 VSP_021366"/>
    </isoform>
</comment>
<comment type="similarity">
    <text evidence="1">Belongs to the eukaryotic ribosomal protein eL22 family.</text>
</comment>
<feature type="initiator methionine" description="Removed">
    <location>
        <position position="1"/>
    </location>
</feature>
<feature type="chain" id="PRO_0000215508" description="Large ribosomal subunit protein eL22">
    <location>
        <begin position="2"/>
        <end position="130"/>
    </location>
</feature>
<feature type="splice variant" id="VSP_021365" description="In isoform b." evidence="1">
    <original>EAFLNEKIKVNG</original>
    <variation>SIEFPSLSQDQA</variation>
    <location>
        <begin position="42"/>
        <end position="53"/>
    </location>
</feature>
<feature type="splice variant" id="VSP_021366" description="In isoform b." evidence="1">
    <location>
        <begin position="54"/>
        <end position="130"/>
    </location>
</feature>
<dbReference type="EMBL" id="FO080349">
    <property type="protein sequence ID" value="CCD63067.1"/>
    <property type="molecule type" value="Genomic_DNA"/>
</dbReference>
<dbReference type="EMBL" id="FO080349">
    <property type="protein sequence ID" value="CCD63068.1"/>
    <property type="molecule type" value="Genomic_DNA"/>
</dbReference>
<dbReference type="PIR" id="T15648">
    <property type="entry name" value="T15648"/>
</dbReference>
<dbReference type="RefSeq" id="NP_494932.1">
    <molecule id="P52819-1"/>
    <property type="nucleotide sequence ID" value="NM_062531.8"/>
</dbReference>
<dbReference type="PDB" id="9BH5">
    <property type="method" value="EM"/>
    <property type="resolution" value="2.63 A"/>
    <property type="chains" value="CU=1-130"/>
</dbReference>
<dbReference type="PDB" id="9CAI">
    <property type="method" value="EM"/>
    <property type="resolution" value="2.59 A"/>
    <property type="chains" value="CU=1-130"/>
</dbReference>
<dbReference type="PDBsum" id="9BH5"/>
<dbReference type="PDBsum" id="9CAI"/>
<dbReference type="EMDB" id="EMD-44533"/>
<dbReference type="EMDB" id="EMD-45392"/>
<dbReference type="SMR" id="P52819"/>
<dbReference type="BioGRID" id="39224">
    <property type="interactions" value="89"/>
</dbReference>
<dbReference type="FunCoup" id="P52819">
    <property type="interactions" value="1915"/>
</dbReference>
<dbReference type="IntAct" id="P52819">
    <property type="interactions" value="1"/>
</dbReference>
<dbReference type="STRING" id="6239.C27A2.2a.1"/>
<dbReference type="iPTMnet" id="P52819"/>
<dbReference type="PaxDb" id="6239-C27A2.2a"/>
<dbReference type="PeptideAtlas" id="P52819"/>
<dbReference type="EnsemblMetazoa" id="C27A2.2a.1">
    <molecule id="P52819-1"/>
    <property type="protein sequence ID" value="C27A2.2a.1"/>
    <property type="gene ID" value="WBGene00004434"/>
</dbReference>
<dbReference type="GeneID" id="173873"/>
<dbReference type="KEGG" id="cel:CELE_C27A2.2"/>
<dbReference type="UCSC" id="C27A2.2a.1">
    <molecule id="P52819-1"/>
    <property type="organism name" value="c. elegans"/>
</dbReference>
<dbReference type="AGR" id="WB:WBGene00004434"/>
<dbReference type="CTD" id="173873"/>
<dbReference type="WormBase" id="C27A2.2a">
    <molecule id="P52819-1"/>
    <property type="protein sequence ID" value="CE04102"/>
    <property type="gene ID" value="WBGene00004434"/>
    <property type="gene designation" value="rpl-22"/>
</dbReference>
<dbReference type="eggNOG" id="KOG3434">
    <property type="taxonomic scope" value="Eukaryota"/>
</dbReference>
<dbReference type="GeneTree" id="ENSGT00940000169435"/>
<dbReference type="HOGENOM" id="CLU_105624_0_1_1"/>
<dbReference type="InParanoid" id="P52819"/>
<dbReference type="OMA" id="QEDGILN"/>
<dbReference type="OrthoDB" id="10259820at2759"/>
<dbReference type="PhylomeDB" id="P52819"/>
<dbReference type="Reactome" id="R-CEL-156827">
    <property type="pathway name" value="L13a-mediated translational silencing of Ceruloplasmin expression"/>
</dbReference>
<dbReference type="Reactome" id="R-CEL-1799339">
    <property type="pathway name" value="SRP-dependent cotranslational protein targeting to membrane"/>
</dbReference>
<dbReference type="Reactome" id="R-CEL-72689">
    <property type="pathway name" value="Formation of a pool of free 40S subunits"/>
</dbReference>
<dbReference type="Reactome" id="R-CEL-72706">
    <property type="pathway name" value="GTP hydrolysis and joining of the 60S ribosomal subunit"/>
</dbReference>
<dbReference type="Reactome" id="R-CEL-975956">
    <property type="pathway name" value="Nonsense Mediated Decay (NMD) independent of the Exon Junction Complex (EJC)"/>
</dbReference>
<dbReference type="Reactome" id="R-CEL-975957">
    <property type="pathway name" value="Nonsense Mediated Decay (NMD) enhanced by the Exon Junction Complex (EJC)"/>
</dbReference>
<dbReference type="PRO" id="PR:P52819"/>
<dbReference type="Proteomes" id="UP000001940">
    <property type="component" value="Chromosome II"/>
</dbReference>
<dbReference type="Bgee" id="WBGene00004434">
    <property type="expression patterns" value="Expressed in germ line (C elegans) and 4 other cell types or tissues"/>
</dbReference>
<dbReference type="GO" id="GO:1990904">
    <property type="term" value="C:ribonucleoprotein complex"/>
    <property type="evidence" value="ECO:0007669"/>
    <property type="project" value="UniProtKB-KW"/>
</dbReference>
<dbReference type="GO" id="GO:0005840">
    <property type="term" value="C:ribosome"/>
    <property type="evidence" value="ECO:0007669"/>
    <property type="project" value="UniProtKB-KW"/>
</dbReference>
<dbReference type="GO" id="GO:0003723">
    <property type="term" value="F:RNA binding"/>
    <property type="evidence" value="ECO:0000318"/>
    <property type="project" value="GO_Central"/>
</dbReference>
<dbReference type="GO" id="GO:0003735">
    <property type="term" value="F:structural constituent of ribosome"/>
    <property type="evidence" value="ECO:0000318"/>
    <property type="project" value="GO_Central"/>
</dbReference>
<dbReference type="GO" id="GO:0002181">
    <property type="term" value="P:cytoplasmic translation"/>
    <property type="evidence" value="ECO:0000318"/>
    <property type="project" value="GO_Central"/>
</dbReference>
<dbReference type="FunFam" id="3.30.1360.210:FF:000001">
    <property type="entry name" value="60S ribosomal protein L22 1"/>
    <property type="match status" value="1"/>
</dbReference>
<dbReference type="Gene3D" id="3.30.1360.210">
    <property type="match status" value="1"/>
</dbReference>
<dbReference type="InterPro" id="IPR002671">
    <property type="entry name" value="Ribosomal_eL22"/>
</dbReference>
<dbReference type="InterPro" id="IPR038526">
    <property type="entry name" value="Ribosomal_eL22_sf"/>
</dbReference>
<dbReference type="PANTHER" id="PTHR10064">
    <property type="entry name" value="60S RIBOSOMAL PROTEIN L22"/>
    <property type="match status" value="1"/>
</dbReference>
<dbReference type="PANTHER" id="PTHR10064:SF0">
    <property type="entry name" value="FI24544P1-RELATED"/>
    <property type="match status" value="1"/>
</dbReference>
<dbReference type="Pfam" id="PF01776">
    <property type="entry name" value="Ribosomal_L22e"/>
    <property type="match status" value="1"/>
</dbReference>
<name>RL22_CAEEL</name>
<reference key="1">
    <citation type="journal article" date="1998" name="Science">
        <title>Genome sequence of the nematode C. elegans: a platform for investigating biology.</title>
        <authorList>
            <consortium name="The C. elegans sequencing consortium"/>
        </authorList>
    </citation>
    <scope>NUCLEOTIDE SEQUENCE [LARGE SCALE GENOMIC DNA]</scope>
    <scope>ALTERNATIVE SPLICING</scope>
    <source>
        <strain>Bristol N2</strain>
    </source>
</reference>
<reference key="2">
    <citation type="submission" date="2006-08" db="UniProtKB">
        <authorList>
            <person name="Bienvenut W.V."/>
        </authorList>
    </citation>
    <scope>PROTEIN SEQUENCE OF 2-8; 29-37; 38-48; 55-64 AND 110-115 (ISOFORM A)</scope>
    <scope>IDENTIFICATION BY MASS SPECTROMETRY</scope>
</reference>
<evidence type="ECO:0000305" key="1"/>
<sequence>MVPKPHAKSAKKALRKKKVHLKFNVECKNPVEDGILRIEDLEAFLNEKIKVNGKTGHLAANNVKVEVAKSKVSVVSEVPFSKRYLKYLTKKYLKRNSLRDWLRVVAVNKNTYEVRYFHINDGEDAGSDHE</sequence>
<proteinExistence type="evidence at protein level"/>
<accession>P52819</accession>
<accession>P85027</accession>
<organism>
    <name type="scientific">Caenorhabditis elegans</name>
    <dbReference type="NCBI Taxonomy" id="6239"/>
    <lineage>
        <taxon>Eukaryota</taxon>
        <taxon>Metazoa</taxon>
        <taxon>Ecdysozoa</taxon>
        <taxon>Nematoda</taxon>
        <taxon>Chromadorea</taxon>
        <taxon>Rhabditida</taxon>
        <taxon>Rhabditina</taxon>
        <taxon>Rhabditomorpha</taxon>
        <taxon>Rhabditoidea</taxon>
        <taxon>Rhabditidae</taxon>
        <taxon>Peloderinae</taxon>
        <taxon>Caenorhabditis</taxon>
    </lineage>
</organism>
<gene>
    <name type="primary">rpl-22</name>
    <name type="ORF">C27A2.2</name>
</gene>